<evidence type="ECO:0000255" key="1">
    <source>
        <dbReference type="PROSITE-ProRule" id="PRU00600"/>
    </source>
</evidence>
<evidence type="ECO:0000269" key="2">
    <source>
    </source>
</evidence>
<evidence type="ECO:0000269" key="3">
    <source>
    </source>
</evidence>
<accession>O59836</accession>
<feature type="chain" id="PRO_0000083978" description="Hsk1-interacting molecule 1">
    <location>
        <begin position="1"/>
        <end position="545"/>
    </location>
</feature>
<feature type="zinc finger region" description="DBF4-type" evidence="1">
    <location>
        <begin position="492"/>
        <end position="541"/>
    </location>
</feature>
<feature type="binding site" evidence="1">
    <location>
        <position position="499"/>
    </location>
    <ligand>
        <name>Zn(2+)</name>
        <dbReference type="ChEBI" id="CHEBI:29105"/>
    </ligand>
</feature>
<feature type="binding site" evidence="1">
    <location>
        <position position="502"/>
    </location>
    <ligand>
        <name>Zn(2+)</name>
        <dbReference type="ChEBI" id="CHEBI:29105"/>
    </ligand>
</feature>
<feature type="binding site" evidence="1">
    <location>
        <position position="512"/>
    </location>
    <ligand>
        <name>Zn(2+)</name>
        <dbReference type="ChEBI" id="CHEBI:29105"/>
    </ligand>
</feature>
<feature type="binding site" evidence="1">
    <location>
        <position position="518"/>
    </location>
    <ligand>
        <name>Zn(2+)</name>
        <dbReference type="ChEBI" id="CHEBI:29105"/>
    </ligand>
</feature>
<name>HIM1_SCHPO</name>
<comment type="function">
    <text evidence="2">Activates hsk1 kinase and is essential for G1/S transition. Has a role in S-phase checkpoint control induced by replication fork blocks after nucleotide deprivation and DNA damage.</text>
</comment>
<comment type="subunit">
    <text evidence="2 3">Associates with hsk1. Interacts with mcm10.</text>
</comment>
<comment type="interaction">
    <interactant intactId="EBI-908382">
        <id>O59836</id>
    </interactant>
    <interactant intactId="EBI-926939">
        <id>P40381</id>
        <label>swi6</label>
    </interactant>
    <organismsDiffer>false</organismsDiffer>
    <experiments>2</experiments>
</comment>
<comment type="subcellular location">
    <subcellularLocation>
        <location evidence="2">Nucleus</location>
    </subcellularLocation>
</comment>
<comment type="PTM">
    <text>Hyperphosphorylated at the G1/S and S-phases of the cell cycle.</text>
</comment>
<protein>
    <recommendedName>
        <fullName>Hsk1-interacting molecule 1</fullName>
    </recommendedName>
    <alternativeName>
        <fullName>DNA repair protein rad35</fullName>
    </alternativeName>
</protein>
<organism>
    <name type="scientific">Schizosaccharomyces pombe (strain 972 / ATCC 24843)</name>
    <name type="common">Fission yeast</name>
    <dbReference type="NCBI Taxonomy" id="284812"/>
    <lineage>
        <taxon>Eukaryota</taxon>
        <taxon>Fungi</taxon>
        <taxon>Dikarya</taxon>
        <taxon>Ascomycota</taxon>
        <taxon>Taphrinomycotina</taxon>
        <taxon>Schizosaccharomycetes</taxon>
        <taxon>Schizosaccharomycetales</taxon>
        <taxon>Schizosaccharomycetaceae</taxon>
        <taxon>Schizosaccharomyces</taxon>
    </lineage>
</organism>
<keyword id="KW-0131">Cell cycle</keyword>
<keyword id="KW-0227">DNA damage</keyword>
<keyword id="KW-0479">Metal-binding</keyword>
<keyword id="KW-0539">Nucleus</keyword>
<keyword id="KW-0597">Phosphoprotein</keyword>
<keyword id="KW-1185">Reference proteome</keyword>
<keyword id="KW-0862">Zinc</keyword>
<keyword id="KW-0863">Zinc-finger</keyword>
<sequence length="545" mass="61860">MNLGRCPLAPRSANIVLPKHDAVSKQKEYRIEEKTNEAQREEIITWKDNREDEGEVKTDFEVVNNENIITTTPKHQTVITPKSYRKSVKRIKHDAPQNEDIPVMKGLAPINADTESKAESMAAGKVLGSKNSSQKARLQEWKRQYKKAFPHFRFYLDGCDPSVAHRVKKQIQQLGGHVETFFSGNVTHVATVRAIQDVSVKYAKQDVITKARQLNMKIWSMEKLCNRVLKTLMENDQCTTNAPTKQGNDLSYLLYVEKVQGTNERDLSVPRQDFVHFRGPYLYVHDIANIYKPILLREWQKPLPDRDVPWPTFRATSIGRCPFVPETKYRLSTSKSLVAKNDQQLLQRQSQEPSLILRANSMKASLPDISNTGISGMNTNTTYNTNINNTPQTAISGITQDTSPSIRTNCHHCLDDGMQASGIVQSNLTSAAMSNNSAIRSGSAASVPVVTINGRDIAELKKRIIQQKSGMIGKDYSYKAMLHNTSQRKIRVDAKPGYCENCREKFDNFESHIRSSRHRRFAENNDNFKDLDELFALVQRPLRPD</sequence>
<reference key="1">
    <citation type="journal article" date="1999" name="Mol. Cell. Biol.">
        <title>A fission yeast gene, him1(+)/dfp1(+), encoding a regulatory subunit for Hsk1 kinase, plays essential roles in S-phase initiation as well as in S-phase checkpoint control and recovery from DNA damage.</title>
        <authorList>
            <person name="Takeda T."/>
            <person name="Ogino K."/>
            <person name="Matsui E."/>
            <person name="Cho M.K."/>
            <person name="Kumagai H."/>
            <person name="Miyake T."/>
            <person name="Arai K."/>
            <person name="Masai H."/>
        </authorList>
    </citation>
    <scope>NUCLEOTIDE SEQUENCE [GENOMIC DNA / MRNA]</scope>
    <scope>FUNCTION</scope>
    <scope>INTERACTION WITH HSK1</scope>
    <scope>SUBCELLULAR LOCATION</scope>
    <scope>PHOSPHORYLATION</scope>
</reference>
<reference key="2">
    <citation type="submission" date="1998-04" db="EMBL/GenBank/DDBJ databases">
        <authorList>
            <person name="Struck C."/>
            <person name="Schmidt H."/>
        </authorList>
    </citation>
    <scope>NUCLEOTIDE SEQUENCE [GENOMIC DNA]</scope>
    <source>
        <strain>972 / ATCC 24843</strain>
    </source>
</reference>
<reference key="3">
    <citation type="journal article" date="2002" name="Nature">
        <title>The genome sequence of Schizosaccharomyces pombe.</title>
        <authorList>
            <person name="Wood V."/>
            <person name="Gwilliam R."/>
            <person name="Rajandream M.A."/>
            <person name="Lyne M.H."/>
            <person name="Lyne R."/>
            <person name="Stewart A."/>
            <person name="Sgouros J.G."/>
            <person name="Peat N."/>
            <person name="Hayles J."/>
            <person name="Baker S.G."/>
            <person name="Basham D."/>
            <person name="Bowman S."/>
            <person name="Brooks K."/>
            <person name="Brown D."/>
            <person name="Brown S."/>
            <person name="Chillingworth T."/>
            <person name="Churcher C.M."/>
            <person name="Collins M."/>
            <person name="Connor R."/>
            <person name="Cronin A."/>
            <person name="Davis P."/>
            <person name="Feltwell T."/>
            <person name="Fraser A."/>
            <person name="Gentles S."/>
            <person name="Goble A."/>
            <person name="Hamlin N."/>
            <person name="Harris D.E."/>
            <person name="Hidalgo J."/>
            <person name="Hodgson G."/>
            <person name="Holroyd S."/>
            <person name="Hornsby T."/>
            <person name="Howarth S."/>
            <person name="Huckle E.J."/>
            <person name="Hunt S."/>
            <person name="Jagels K."/>
            <person name="James K.D."/>
            <person name="Jones L."/>
            <person name="Jones M."/>
            <person name="Leather S."/>
            <person name="McDonald S."/>
            <person name="McLean J."/>
            <person name="Mooney P."/>
            <person name="Moule S."/>
            <person name="Mungall K.L."/>
            <person name="Murphy L.D."/>
            <person name="Niblett D."/>
            <person name="Odell C."/>
            <person name="Oliver K."/>
            <person name="O'Neil S."/>
            <person name="Pearson D."/>
            <person name="Quail M.A."/>
            <person name="Rabbinowitsch E."/>
            <person name="Rutherford K.M."/>
            <person name="Rutter S."/>
            <person name="Saunders D."/>
            <person name="Seeger K."/>
            <person name="Sharp S."/>
            <person name="Skelton J."/>
            <person name="Simmonds M.N."/>
            <person name="Squares R."/>
            <person name="Squares S."/>
            <person name="Stevens K."/>
            <person name="Taylor K."/>
            <person name="Taylor R.G."/>
            <person name="Tivey A."/>
            <person name="Walsh S.V."/>
            <person name="Warren T."/>
            <person name="Whitehead S."/>
            <person name="Woodward J.R."/>
            <person name="Volckaert G."/>
            <person name="Aert R."/>
            <person name="Robben J."/>
            <person name="Grymonprez B."/>
            <person name="Weltjens I."/>
            <person name="Vanstreels E."/>
            <person name="Rieger M."/>
            <person name="Schaefer M."/>
            <person name="Mueller-Auer S."/>
            <person name="Gabel C."/>
            <person name="Fuchs M."/>
            <person name="Duesterhoeft A."/>
            <person name="Fritzc C."/>
            <person name="Holzer E."/>
            <person name="Moestl D."/>
            <person name="Hilbert H."/>
            <person name="Borzym K."/>
            <person name="Langer I."/>
            <person name="Beck A."/>
            <person name="Lehrach H."/>
            <person name="Reinhardt R."/>
            <person name="Pohl T.M."/>
            <person name="Eger P."/>
            <person name="Zimmermann W."/>
            <person name="Wedler H."/>
            <person name="Wambutt R."/>
            <person name="Purnelle B."/>
            <person name="Goffeau A."/>
            <person name="Cadieu E."/>
            <person name="Dreano S."/>
            <person name="Gloux S."/>
            <person name="Lelaure V."/>
            <person name="Mottier S."/>
            <person name="Galibert F."/>
            <person name="Aves S.J."/>
            <person name="Xiang Z."/>
            <person name="Hunt C."/>
            <person name="Moore K."/>
            <person name="Hurst S.M."/>
            <person name="Lucas M."/>
            <person name="Rochet M."/>
            <person name="Gaillardin C."/>
            <person name="Tallada V.A."/>
            <person name="Garzon A."/>
            <person name="Thode G."/>
            <person name="Daga R.R."/>
            <person name="Cruzado L."/>
            <person name="Jimenez J."/>
            <person name="Sanchez M."/>
            <person name="del Rey F."/>
            <person name="Benito J."/>
            <person name="Dominguez A."/>
            <person name="Revuelta J.L."/>
            <person name="Moreno S."/>
            <person name="Armstrong J."/>
            <person name="Forsburg S.L."/>
            <person name="Cerutti L."/>
            <person name="Lowe T."/>
            <person name="McCombie W.R."/>
            <person name="Paulsen I."/>
            <person name="Potashkin J."/>
            <person name="Shpakovski G.V."/>
            <person name="Ussery D."/>
            <person name="Barrell B.G."/>
            <person name="Nurse P."/>
        </authorList>
    </citation>
    <scope>NUCLEOTIDE SEQUENCE [LARGE SCALE GENOMIC DNA]</scope>
    <source>
        <strain>972 / ATCC 24843</strain>
    </source>
</reference>
<reference key="4">
    <citation type="journal article" date="2003" name="Proc. Natl. Acad. Sci. U.S.A.">
        <title>The Cdc23 (Mcm10) protein is required for the phosphorylation of minichromosome maintenance complex by the Dfp1-Hsk1 kinase.</title>
        <authorList>
            <person name="Lee J.-K."/>
            <person name="Seo Y.-S."/>
            <person name="Hurwitz J."/>
        </authorList>
    </citation>
    <scope>INTERACTION WITH MCM10</scope>
</reference>
<gene>
    <name type="primary">him1</name>
    <name type="synonym">dfp1</name>
    <name type="synonym">rad35</name>
    <name type="ORF">SPCC550.13</name>
</gene>
<dbReference type="EMBL" id="AF110398">
    <property type="protein sequence ID" value="AAD03738.1"/>
    <property type="molecule type" value="Genomic_DNA"/>
</dbReference>
<dbReference type="EMBL" id="AB028068">
    <property type="protein sequence ID" value="BAA78328.1"/>
    <property type="molecule type" value="mRNA"/>
</dbReference>
<dbReference type="EMBL" id="Y17146">
    <property type="protein sequence ID" value="CAA76653.1"/>
    <property type="molecule type" value="Genomic_DNA"/>
</dbReference>
<dbReference type="EMBL" id="CU329672">
    <property type="protein sequence ID" value="CAA19117.1"/>
    <property type="molecule type" value="Genomic_DNA"/>
</dbReference>
<dbReference type="PIR" id="T43513">
    <property type="entry name" value="T43513"/>
</dbReference>
<dbReference type="RefSeq" id="NP_588105.1">
    <property type="nucleotide sequence ID" value="NM_001023096.2"/>
</dbReference>
<dbReference type="SMR" id="O59836"/>
<dbReference type="BioGRID" id="275964">
    <property type="interactions" value="19"/>
</dbReference>
<dbReference type="FunCoup" id="O59836">
    <property type="interactions" value="130"/>
</dbReference>
<dbReference type="IntAct" id="O59836">
    <property type="interactions" value="5"/>
</dbReference>
<dbReference type="STRING" id="284812.O59836"/>
<dbReference type="iPTMnet" id="O59836"/>
<dbReference type="PaxDb" id="4896-SPCC550.13.1"/>
<dbReference type="EnsemblFungi" id="SPCC550.13.1">
    <property type="protein sequence ID" value="SPCC550.13.1:pep"/>
    <property type="gene ID" value="SPCC550.13"/>
</dbReference>
<dbReference type="GeneID" id="2539399"/>
<dbReference type="KEGG" id="spo:2539399"/>
<dbReference type="PomBase" id="SPCC550.13"/>
<dbReference type="VEuPathDB" id="FungiDB:SPCC550.13"/>
<dbReference type="eggNOG" id="KOG4139">
    <property type="taxonomic scope" value="Eukaryota"/>
</dbReference>
<dbReference type="HOGENOM" id="CLU_023948_0_0_1"/>
<dbReference type="InParanoid" id="O59836"/>
<dbReference type="OMA" id="GMKIWAI"/>
<dbReference type="PhylomeDB" id="O59836"/>
<dbReference type="Reactome" id="R-SPO-176187">
    <property type="pathway name" value="Activation of ATR in response to replication stress"/>
</dbReference>
<dbReference type="Reactome" id="R-SPO-68962">
    <property type="pathway name" value="Activation of the pre-replicative complex"/>
</dbReference>
<dbReference type="PRO" id="PR:O59836"/>
<dbReference type="Proteomes" id="UP000002485">
    <property type="component" value="Chromosome III"/>
</dbReference>
<dbReference type="GO" id="GO:0031431">
    <property type="term" value="C:Dbf4-dependent protein kinase complex"/>
    <property type="evidence" value="ECO:0000314"/>
    <property type="project" value="PomBase"/>
</dbReference>
<dbReference type="GO" id="GO:0044732">
    <property type="term" value="C:mitotic spindle pole body"/>
    <property type="evidence" value="ECO:0007005"/>
    <property type="project" value="PomBase"/>
</dbReference>
<dbReference type="GO" id="GO:0005634">
    <property type="term" value="C:nucleus"/>
    <property type="evidence" value="ECO:0000314"/>
    <property type="project" value="PomBase"/>
</dbReference>
<dbReference type="GO" id="GO:0003676">
    <property type="term" value="F:nucleic acid binding"/>
    <property type="evidence" value="ECO:0007669"/>
    <property type="project" value="InterPro"/>
</dbReference>
<dbReference type="GO" id="GO:0030295">
    <property type="term" value="F:protein kinase activator activity"/>
    <property type="evidence" value="ECO:0000314"/>
    <property type="project" value="PomBase"/>
</dbReference>
<dbReference type="GO" id="GO:0043539">
    <property type="term" value="F:protein serine/threonine kinase activator activity"/>
    <property type="evidence" value="ECO:0000269"/>
    <property type="project" value="PomBase"/>
</dbReference>
<dbReference type="GO" id="GO:0008270">
    <property type="term" value="F:zinc ion binding"/>
    <property type="evidence" value="ECO:0007669"/>
    <property type="project" value="UniProtKB-KW"/>
</dbReference>
<dbReference type="GO" id="GO:0006974">
    <property type="term" value="P:DNA damage response"/>
    <property type="evidence" value="ECO:0007669"/>
    <property type="project" value="UniProtKB-KW"/>
</dbReference>
<dbReference type="GO" id="GO:0033314">
    <property type="term" value="P:mitotic DNA replication checkpoint signaling"/>
    <property type="evidence" value="ECO:0000315"/>
    <property type="project" value="PomBase"/>
</dbReference>
<dbReference type="GO" id="GO:0045739">
    <property type="term" value="P:positive regulation of DNA repair"/>
    <property type="evidence" value="ECO:0000315"/>
    <property type="project" value="PomBase"/>
</dbReference>
<dbReference type="GO" id="GO:1903468">
    <property type="term" value="P:positive regulation of DNA replication initiation"/>
    <property type="evidence" value="ECO:0000314"/>
    <property type="project" value="PomBase"/>
</dbReference>
<dbReference type="GO" id="GO:0010571">
    <property type="term" value="P:positive regulation of nuclear cell cycle DNA replication"/>
    <property type="evidence" value="ECO:0000318"/>
    <property type="project" value="GO_Central"/>
</dbReference>
<dbReference type="GO" id="GO:1901987">
    <property type="term" value="P:regulation of cell cycle phase transition"/>
    <property type="evidence" value="ECO:0000318"/>
    <property type="project" value="GO_Central"/>
</dbReference>
<dbReference type="CDD" id="cd00027">
    <property type="entry name" value="BRCT"/>
    <property type="match status" value="1"/>
</dbReference>
<dbReference type="FunFam" id="6.10.250.3410:FF:000001">
    <property type="entry name" value="Protein DBF4 homolog A"/>
    <property type="match status" value="1"/>
</dbReference>
<dbReference type="Gene3D" id="3.40.50.10190">
    <property type="entry name" value="BRCT domain"/>
    <property type="match status" value="1"/>
</dbReference>
<dbReference type="Gene3D" id="6.10.250.3410">
    <property type="entry name" value="DBF zinc finger"/>
    <property type="match status" value="1"/>
</dbReference>
<dbReference type="InterPro" id="IPR001357">
    <property type="entry name" value="BRCT_dom"/>
</dbReference>
<dbReference type="InterPro" id="IPR036420">
    <property type="entry name" value="BRCT_dom_sf"/>
</dbReference>
<dbReference type="InterPro" id="IPR055116">
    <property type="entry name" value="DBF4_BRCT"/>
</dbReference>
<dbReference type="InterPro" id="IPR013939">
    <property type="entry name" value="Regulatory_Dfp1/Him1"/>
</dbReference>
<dbReference type="InterPro" id="IPR051590">
    <property type="entry name" value="Replication_Regulatory_Kinase"/>
</dbReference>
<dbReference type="InterPro" id="IPR006572">
    <property type="entry name" value="Znf_DBF"/>
</dbReference>
<dbReference type="InterPro" id="IPR038545">
    <property type="entry name" value="Znf_DBF_sf"/>
</dbReference>
<dbReference type="PANTHER" id="PTHR15375">
    <property type="entry name" value="ACTIVATOR OF S-PHASE KINASE-RELATED"/>
    <property type="match status" value="1"/>
</dbReference>
<dbReference type="PANTHER" id="PTHR15375:SF26">
    <property type="entry name" value="PROTEIN CHIFFON"/>
    <property type="match status" value="1"/>
</dbReference>
<dbReference type="Pfam" id="PF22437">
    <property type="entry name" value="DBF4_BRCT"/>
    <property type="match status" value="1"/>
</dbReference>
<dbReference type="Pfam" id="PF08630">
    <property type="entry name" value="Dfp1_Him1_M"/>
    <property type="match status" value="1"/>
</dbReference>
<dbReference type="Pfam" id="PF07535">
    <property type="entry name" value="zf-DBF"/>
    <property type="match status" value="1"/>
</dbReference>
<dbReference type="SMART" id="SM00292">
    <property type="entry name" value="BRCT"/>
    <property type="match status" value="1"/>
</dbReference>
<dbReference type="SMART" id="SM00586">
    <property type="entry name" value="ZnF_DBF"/>
    <property type="match status" value="1"/>
</dbReference>
<dbReference type="PROSITE" id="PS51265">
    <property type="entry name" value="ZF_DBF4"/>
    <property type="match status" value="1"/>
</dbReference>
<proteinExistence type="evidence at protein level"/>